<feature type="chain" id="PRO_1000202562" description="Acetylglutamate kinase">
    <location>
        <begin position="1"/>
        <end position="292"/>
    </location>
</feature>
<feature type="binding site" evidence="1">
    <location>
        <begin position="64"/>
        <end position="65"/>
    </location>
    <ligand>
        <name>substrate</name>
    </ligand>
</feature>
<feature type="binding site" evidence="1">
    <location>
        <position position="86"/>
    </location>
    <ligand>
        <name>substrate</name>
    </ligand>
</feature>
<feature type="binding site" evidence="1">
    <location>
        <position position="190"/>
    </location>
    <ligand>
        <name>substrate</name>
    </ligand>
</feature>
<feature type="site" description="Transition state stabilizer" evidence="1">
    <location>
        <position position="29"/>
    </location>
</feature>
<feature type="site" description="Transition state stabilizer" evidence="1">
    <location>
        <position position="250"/>
    </location>
</feature>
<proteinExistence type="inferred from homology"/>
<dbReference type="EC" id="2.7.2.8" evidence="1"/>
<dbReference type="EMBL" id="CP001661">
    <property type="protein sequence ID" value="ACT19759.1"/>
    <property type="molecule type" value="Genomic_DNA"/>
</dbReference>
<dbReference type="SMR" id="C6E6Y1"/>
<dbReference type="STRING" id="443144.GM21_3740"/>
<dbReference type="KEGG" id="gem:GM21_3740"/>
<dbReference type="eggNOG" id="COG0548">
    <property type="taxonomic scope" value="Bacteria"/>
</dbReference>
<dbReference type="HOGENOM" id="CLU_053680_0_0_7"/>
<dbReference type="OrthoDB" id="9803155at2"/>
<dbReference type="UniPathway" id="UPA00068">
    <property type="reaction ID" value="UER00107"/>
</dbReference>
<dbReference type="GO" id="GO:0005737">
    <property type="term" value="C:cytoplasm"/>
    <property type="evidence" value="ECO:0007669"/>
    <property type="project" value="UniProtKB-SubCell"/>
</dbReference>
<dbReference type="GO" id="GO:0003991">
    <property type="term" value="F:acetylglutamate kinase activity"/>
    <property type="evidence" value="ECO:0007669"/>
    <property type="project" value="UniProtKB-UniRule"/>
</dbReference>
<dbReference type="GO" id="GO:0005524">
    <property type="term" value="F:ATP binding"/>
    <property type="evidence" value="ECO:0007669"/>
    <property type="project" value="UniProtKB-UniRule"/>
</dbReference>
<dbReference type="GO" id="GO:0042450">
    <property type="term" value="P:arginine biosynthetic process via ornithine"/>
    <property type="evidence" value="ECO:0007669"/>
    <property type="project" value="UniProtKB-UniRule"/>
</dbReference>
<dbReference type="GO" id="GO:0006526">
    <property type="term" value="P:L-arginine biosynthetic process"/>
    <property type="evidence" value="ECO:0007669"/>
    <property type="project" value="UniProtKB-UniPathway"/>
</dbReference>
<dbReference type="CDD" id="cd04250">
    <property type="entry name" value="AAK_NAGK-C"/>
    <property type="match status" value="1"/>
</dbReference>
<dbReference type="FunFam" id="3.40.1160.10:FF:000004">
    <property type="entry name" value="Acetylglutamate kinase"/>
    <property type="match status" value="1"/>
</dbReference>
<dbReference type="Gene3D" id="3.40.1160.10">
    <property type="entry name" value="Acetylglutamate kinase-like"/>
    <property type="match status" value="1"/>
</dbReference>
<dbReference type="HAMAP" id="MF_00082">
    <property type="entry name" value="ArgB"/>
    <property type="match status" value="1"/>
</dbReference>
<dbReference type="InterPro" id="IPR036393">
    <property type="entry name" value="AceGlu_kinase-like_sf"/>
</dbReference>
<dbReference type="InterPro" id="IPR004662">
    <property type="entry name" value="AcgluKinase_fam"/>
</dbReference>
<dbReference type="InterPro" id="IPR037528">
    <property type="entry name" value="ArgB"/>
</dbReference>
<dbReference type="InterPro" id="IPR001048">
    <property type="entry name" value="Asp/Glu/Uridylate_kinase"/>
</dbReference>
<dbReference type="InterPro" id="IPR001057">
    <property type="entry name" value="Glu/AcGlu_kinase"/>
</dbReference>
<dbReference type="InterPro" id="IPR041727">
    <property type="entry name" value="NAGK-C"/>
</dbReference>
<dbReference type="NCBIfam" id="TIGR00761">
    <property type="entry name" value="argB"/>
    <property type="match status" value="1"/>
</dbReference>
<dbReference type="PANTHER" id="PTHR23342">
    <property type="entry name" value="N-ACETYLGLUTAMATE SYNTHASE"/>
    <property type="match status" value="1"/>
</dbReference>
<dbReference type="PANTHER" id="PTHR23342:SF0">
    <property type="entry name" value="N-ACETYLGLUTAMATE SYNTHASE, MITOCHONDRIAL"/>
    <property type="match status" value="1"/>
</dbReference>
<dbReference type="Pfam" id="PF00696">
    <property type="entry name" value="AA_kinase"/>
    <property type="match status" value="1"/>
</dbReference>
<dbReference type="PIRSF" id="PIRSF000728">
    <property type="entry name" value="NAGK"/>
    <property type="match status" value="1"/>
</dbReference>
<dbReference type="PRINTS" id="PR00474">
    <property type="entry name" value="GLU5KINASE"/>
</dbReference>
<dbReference type="SUPFAM" id="SSF53633">
    <property type="entry name" value="Carbamate kinase-like"/>
    <property type="match status" value="1"/>
</dbReference>
<sequence length="292" mass="30824">MQQLIEKASTLMEALPYIRRFSGKTIVIKYGGHAMADEKLRKSFALDVILLKYIGINTVVVHGGGPQINETLKRYGIVSEFVKGMRVTDKETMGVVEMVLTGQVNREVVGYINQNGGRAAGLSGKDGDLLICEKLLQEVKSEDGSTETVDIGFVGDVVEVNPAILQALEKGGFIPVIAPVGVGRAGESYNINADVVAGKVAAALNAEKLILLTDVSGVKSKEGELLSSIPLAEVPALIDNGTVTGGMIPKVTCCTDALAAGVKKAHIVDGRIEHAILLEIFTNVGIGTEIQA</sequence>
<comment type="function">
    <text evidence="1">Catalyzes the ATP-dependent phosphorylation of N-acetyl-L-glutamate.</text>
</comment>
<comment type="catalytic activity">
    <reaction evidence="1">
        <text>N-acetyl-L-glutamate + ATP = N-acetyl-L-glutamyl 5-phosphate + ADP</text>
        <dbReference type="Rhea" id="RHEA:14629"/>
        <dbReference type="ChEBI" id="CHEBI:30616"/>
        <dbReference type="ChEBI" id="CHEBI:44337"/>
        <dbReference type="ChEBI" id="CHEBI:57936"/>
        <dbReference type="ChEBI" id="CHEBI:456216"/>
        <dbReference type="EC" id="2.7.2.8"/>
    </reaction>
</comment>
<comment type="pathway">
    <text evidence="1">Amino-acid biosynthesis; L-arginine biosynthesis; N(2)-acetyl-L-ornithine from L-glutamate: step 2/4.</text>
</comment>
<comment type="subcellular location">
    <subcellularLocation>
        <location evidence="1">Cytoplasm</location>
    </subcellularLocation>
</comment>
<comment type="similarity">
    <text evidence="1">Belongs to the acetylglutamate kinase family. ArgB subfamily.</text>
</comment>
<name>ARGB_GEOSM</name>
<protein>
    <recommendedName>
        <fullName evidence="1">Acetylglutamate kinase</fullName>
        <ecNumber evidence="1">2.7.2.8</ecNumber>
    </recommendedName>
    <alternativeName>
        <fullName evidence="1">N-acetyl-L-glutamate 5-phosphotransferase</fullName>
    </alternativeName>
    <alternativeName>
        <fullName evidence="1">NAG kinase</fullName>
        <shortName evidence="1">NAGK</shortName>
    </alternativeName>
</protein>
<organism>
    <name type="scientific">Geobacter sp. (strain M21)</name>
    <dbReference type="NCBI Taxonomy" id="443144"/>
    <lineage>
        <taxon>Bacteria</taxon>
        <taxon>Pseudomonadati</taxon>
        <taxon>Thermodesulfobacteriota</taxon>
        <taxon>Desulfuromonadia</taxon>
        <taxon>Geobacterales</taxon>
        <taxon>Geobacteraceae</taxon>
        <taxon>Geobacter</taxon>
    </lineage>
</organism>
<gene>
    <name evidence="1" type="primary">argB</name>
    <name type="ordered locus">GM21_3740</name>
</gene>
<reference key="1">
    <citation type="submission" date="2009-07" db="EMBL/GenBank/DDBJ databases">
        <title>Complete sequence of Geobacter sp. M21.</title>
        <authorList>
            <consortium name="US DOE Joint Genome Institute"/>
            <person name="Lucas S."/>
            <person name="Copeland A."/>
            <person name="Lapidus A."/>
            <person name="Glavina del Rio T."/>
            <person name="Dalin E."/>
            <person name="Tice H."/>
            <person name="Bruce D."/>
            <person name="Goodwin L."/>
            <person name="Pitluck S."/>
            <person name="Saunders E."/>
            <person name="Brettin T."/>
            <person name="Detter J.C."/>
            <person name="Han C."/>
            <person name="Larimer F."/>
            <person name="Land M."/>
            <person name="Hauser L."/>
            <person name="Kyrpides N."/>
            <person name="Ovchinnikova G."/>
            <person name="Lovley D."/>
        </authorList>
    </citation>
    <scope>NUCLEOTIDE SEQUENCE [LARGE SCALE GENOMIC DNA]</scope>
    <source>
        <strain>M21</strain>
    </source>
</reference>
<keyword id="KW-0028">Amino-acid biosynthesis</keyword>
<keyword id="KW-0055">Arginine biosynthesis</keyword>
<keyword id="KW-0067">ATP-binding</keyword>
<keyword id="KW-0963">Cytoplasm</keyword>
<keyword id="KW-0418">Kinase</keyword>
<keyword id="KW-0547">Nucleotide-binding</keyword>
<keyword id="KW-0808">Transferase</keyword>
<accession>C6E6Y1</accession>
<evidence type="ECO:0000255" key="1">
    <source>
        <dbReference type="HAMAP-Rule" id="MF_00082"/>
    </source>
</evidence>